<feature type="chain" id="PRO_1000013486" description="Large ribosomal subunit protein bL34">
    <location>
        <begin position="1"/>
        <end position="44"/>
    </location>
</feature>
<name>RL34_THIDA</name>
<accession>Q3SER0</accession>
<proteinExistence type="inferred from homology"/>
<organism>
    <name type="scientific">Thiobacillus denitrificans (strain ATCC 25259 / T1)</name>
    <dbReference type="NCBI Taxonomy" id="292415"/>
    <lineage>
        <taxon>Bacteria</taxon>
        <taxon>Pseudomonadati</taxon>
        <taxon>Pseudomonadota</taxon>
        <taxon>Betaproteobacteria</taxon>
        <taxon>Nitrosomonadales</taxon>
        <taxon>Thiobacillaceae</taxon>
        <taxon>Thiobacillus</taxon>
    </lineage>
</organism>
<keyword id="KW-1185">Reference proteome</keyword>
<keyword id="KW-0687">Ribonucleoprotein</keyword>
<keyword id="KW-0689">Ribosomal protein</keyword>
<comment type="similarity">
    <text evidence="1">Belongs to the bacterial ribosomal protein bL34 family.</text>
</comment>
<gene>
    <name evidence="1" type="primary">rpmH</name>
    <name type="ordered locus">Tbd_2827</name>
</gene>
<evidence type="ECO:0000255" key="1">
    <source>
        <dbReference type="HAMAP-Rule" id="MF_00391"/>
    </source>
</evidence>
<evidence type="ECO:0000305" key="2"/>
<sequence length="44" mass="5110">MKRTYQPSTVRRKRTHGFRARMKTKAGRAVINARRAKGRARLAV</sequence>
<reference key="1">
    <citation type="journal article" date="2006" name="J. Bacteriol.">
        <title>The genome sequence of the obligately chemolithoautotrophic, facultatively anaerobic bacterium Thiobacillus denitrificans.</title>
        <authorList>
            <person name="Beller H.R."/>
            <person name="Chain P.S."/>
            <person name="Letain T.E."/>
            <person name="Chakicherla A."/>
            <person name="Larimer F.W."/>
            <person name="Richardson P.M."/>
            <person name="Coleman M.A."/>
            <person name="Wood A.P."/>
            <person name="Kelly D.P."/>
        </authorList>
    </citation>
    <scope>NUCLEOTIDE SEQUENCE [LARGE SCALE GENOMIC DNA]</scope>
    <source>
        <strain>ATCC 25259 / T1</strain>
    </source>
</reference>
<dbReference type="EMBL" id="CP000116">
    <property type="protein sequence ID" value="AAZ98780.1"/>
    <property type="molecule type" value="Genomic_DNA"/>
</dbReference>
<dbReference type="RefSeq" id="WP_011313339.1">
    <property type="nucleotide sequence ID" value="NC_007404.1"/>
</dbReference>
<dbReference type="SMR" id="Q3SER0"/>
<dbReference type="STRING" id="292415.Tbd_2827"/>
<dbReference type="KEGG" id="tbd:Tbd_2827"/>
<dbReference type="eggNOG" id="COG0230">
    <property type="taxonomic scope" value="Bacteria"/>
</dbReference>
<dbReference type="HOGENOM" id="CLU_129938_2_0_4"/>
<dbReference type="OrthoDB" id="9804164at2"/>
<dbReference type="Proteomes" id="UP000008291">
    <property type="component" value="Chromosome"/>
</dbReference>
<dbReference type="GO" id="GO:1990904">
    <property type="term" value="C:ribonucleoprotein complex"/>
    <property type="evidence" value="ECO:0007669"/>
    <property type="project" value="UniProtKB-KW"/>
</dbReference>
<dbReference type="GO" id="GO:0005840">
    <property type="term" value="C:ribosome"/>
    <property type="evidence" value="ECO:0007669"/>
    <property type="project" value="UniProtKB-KW"/>
</dbReference>
<dbReference type="GO" id="GO:0003735">
    <property type="term" value="F:structural constituent of ribosome"/>
    <property type="evidence" value="ECO:0007669"/>
    <property type="project" value="InterPro"/>
</dbReference>
<dbReference type="GO" id="GO:0006412">
    <property type="term" value="P:translation"/>
    <property type="evidence" value="ECO:0007669"/>
    <property type="project" value="UniProtKB-UniRule"/>
</dbReference>
<dbReference type="FunFam" id="1.10.287.3980:FF:000001">
    <property type="entry name" value="Mitochondrial ribosomal protein L34"/>
    <property type="match status" value="1"/>
</dbReference>
<dbReference type="Gene3D" id="1.10.287.3980">
    <property type="match status" value="1"/>
</dbReference>
<dbReference type="HAMAP" id="MF_00391">
    <property type="entry name" value="Ribosomal_bL34"/>
    <property type="match status" value="1"/>
</dbReference>
<dbReference type="InterPro" id="IPR000271">
    <property type="entry name" value="Ribosomal_bL34"/>
</dbReference>
<dbReference type="InterPro" id="IPR020939">
    <property type="entry name" value="Ribosomal_bL34_CS"/>
</dbReference>
<dbReference type="NCBIfam" id="TIGR01030">
    <property type="entry name" value="rpmH_bact"/>
    <property type="match status" value="1"/>
</dbReference>
<dbReference type="PANTHER" id="PTHR14503:SF4">
    <property type="entry name" value="LARGE RIBOSOMAL SUBUNIT PROTEIN BL34M"/>
    <property type="match status" value="1"/>
</dbReference>
<dbReference type="PANTHER" id="PTHR14503">
    <property type="entry name" value="MITOCHONDRIAL RIBOSOMAL PROTEIN 34 FAMILY MEMBER"/>
    <property type="match status" value="1"/>
</dbReference>
<dbReference type="Pfam" id="PF00468">
    <property type="entry name" value="Ribosomal_L34"/>
    <property type="match status" value="1"/>
</dbReference>
<dbReference type="PROSITE" id="PS00784">
    <property type="entry name" value="RIBOSOMAL_L34"/>
    <property type="match status" value="1"/>
</dbReference>
<protein>
    <recommendedName>
        <fullName evidence="1">Large ribosomal subunit protein bL34</fullName>
    </recommendedName>
    <alternativeName>
        <fullName evidence="2">50S ribosomal protein L34</fullName>
    </alternativeName>
</protein>